<accession>Q3ZCJ2</accession>
<organism>
    <name type="scientific">Bos taurus</name>
    <name type="common">Bovine</name>
    <dbReference type="NCBI Taxonomy" id="9913"/>
    <lineage>
        <taxon>Eukaryota</taxon>
        <taxon>Metazoa</taxon>
        <taxon>Chordata</taxon>
        <taxon>Craniata</taxon>
        <taxon>Vertebrata</taxon>
        <taxon>Euteleostomi</taxon>
        <taxon>Mammalia</taxon>
        <taxon>Eutheria</taxon>
        <taxon>Laurasiatheria</taxon>
        <taxon>Artiodactyla</taxon>
        <taxon>Ruminantia</taxon>
        <taxon>Pecora</taxon>
        <taxon>Bovidae</taxon>
        <taxon>Bovinae</taxon>
        <taxon>Bos</taxon>
    </lineage>
</organism>
<reference key="1">
    <citation type="submission" date="2005-08" db="EMBL/GenBank/DDBJ databases">
        <authorList>
            <consortium name="NIH - Mammalian Gene Collection (MGC) project"/>
        </authorList>
    </citation>
    <scope>NUCLEOTIDE SEQUENCE [LARGE SCALE MRNA]</scope>
    <source>
        <strain>Crossbred X Angus</strain>
        <tissue>Ileum</tissue>
    </source>
</reference>
<reference key="2">
    <citation type="journal article" date="2014" name="Proc. Natl. Acad. Sci. U.S.A.">
        <title>Identification of S-nitroso-CoA reductases that regulate protein S-nitrosylation.</title>
        <authorList>
            <person name="Anand P."/>
            <person name="Hausladen A."/>
            <person name="Wang Y.J."/>
            <person name="Zhang G.F."/>
            <person name="Stomberski C."/>
            <person name="Brunengraber H."/>
            <person name="Hess D.T."/>
            <person name="Stamler J.S."/>
        </authorList>
    </citation>
    <scope>FUNCTION</scope>
    <scope>CATALYTIC ACTIVITY</scope>
    <scope>BIOPHYSICOCHEMICAL PROPERTIES</scope>
</reference>
<reference key="3">
    <citation type="journal article" date="2019" name="J. Biol. Chem.">
        <title>AKR1A1 is a novel mammalian S-nitroso-glutathione reductase.</title>
        <authorList>
            <person name="Stomberski C.T."/>
            <person name="Anand P."/>
            <person name="Venetos N.M."/>
            <person name="Hausladen A."/>
            <person name="Zhou H.L."/>
            <person name="Premont R.T."/>
            <person name="Stamler J.S."/>
        </authorList>
    </citation>
    <scope>FUNCTION</scope>
    <scope>CATALYTIC ACTIVITY</scope>
    <scope>BIOPHYSICOCHEMICAL PROPERTIES</scope>
</reference>
<comment type="function">
    <text evidence="2 3 4 6 7">Catalyzes the NADPH-dependent reduction of a wide variety of carbonyl-containing compounds to their corresponding alcohols. Displays enzymatic activity towards endogenous metabolites such as aromatic and aliphatic aldehydes, ketones, monosaccharides and bile acids, with a preference for negatively charged substrates, such as glucuronate and succinic semialdehyde (By similarity). Plays an important role in ascorbic acid biosynthesis by catalyzing the reduction of D-glucuronic acid and D-glucurono-gamma-lactone (By similarity). Functions as a detoxifiying enzyme by reducing a range of toxic aldehydes. Reduces methylglyoxal and 3-deoxyglucosone, which are present at elevated levels under hyperglycemic conditions and are cytotoxic. Involved also in the detoxification of lipid-derived aldehydes like acrolein (By similarity). Plays a role in the activation of procarcinogens, such as polycyclic aromatic hydrocarbon trans-dihydrodiols, and in the metabolism of various xenobiotics and drugs (By similarity). Also acts as an inhibitor of protein S-nitrosylation by mediating degradation of S-nitroso-coenzyme A (S-nitroso-CoA), a cofactor required to S-nitrosylate proteins (PubMed:25512491). S-nitroso-CoA reductase activity is involved in reprogramming intermediary metabolism in renal proximal tubules, notably by inhibiting protein S-nitrosylation of isoform 2 of PKM (PKM2) (By similarity). Also acts as a S-nitroso-glutathione reductase by catalyzing the NADPH-dependent reduction of S-nitrosoglutathione (PubMed:31649033). Displays no reductase activity towards retinoids (By similarity).</text>
</comment>
<comment type="catalytic activity">
    <reaction evidence="4">
        <text>a primary alcohol + NADP(+) = an aldehyde + NADPH + H(+)</text>
        <dbReference type="Rhea" id="RHEA:15937"/>
        <dbReference type="ChEBI" id="CHEBI:15378"/>
        <dbReference type="ChEBI" id="CHEBI:15734"/>
        <dbReference type="ChEBI" id="CHEBI:17478"/>
        <dbReference type="ChEBI" id="CHEBI:57783"/>
        <dbReference type="ChEBI" id="CHEBI:58349"/>
        <dbReference type="EC" id="1.1.1.2"/>
    </reaction>
</comment>
<comment type="catalytic activity">
    <reaction evidence="4">
        <text>L-gulonate + NADP(+) = aldehydo-D-glucuronate + NADPH + H(+)</text>
        <dbReference type="Rhea" id="RHEA:14909"/>
        <dbReference type="ChEBI" id="CHEBI:13115"/>
        <dbReference type="ChEBI" id="CHEBI:15378"/>
        <dbReference type="ChEBI" id="CHEBI:57783"/>
        <dbReference type="ChEBI" id="CHEBI:58349"/>
        <dbReference type="ChEBI" id="CHEBI:142686"/>
        <dbReference type="EC" id="1.1.1.19"/>
    </reaction>
</comment>
<comment type="catalytic activity">
    <reaction evidence="4">
        <text>L-gulono-1,4-lactone + NADP(+) = D-glucurono-3,6-lactone + NADPH + H(+)</text>
        <dbReference type="Rhea" id="RHEA:18925"/>
        <dbReference type="ChEBI" id="CHEBI:15378"/>
        <dbReference type="ChEBI" id="CHEBI:17587"/>
        <dbReference type="ChEBI" id="CHEBI:18268"/>
        <dbReference type="ChEBI" id="CHEBI:57783"/>
        <dbReference type="ChEBI" id="CHEBI:58349"/>
        <dbReference type="EC" id="1.1.1.20"/>
    </reaction>
</comment>
<comment type="catalytic activity">
    <reaction evidence="4">
        <text>allyl alcohol + NADP(+) = acrolein + NADPH + H(+)</text>
        <dbReference type="Rhea" id="RHEA:12168"/>
        <dbReference type="ChEBI" id="CHEBI:15368"/>
        <dbReference type="ChEBI" id="CHEBI:15378"/>
        <dbReference type="ChEBI" id="CHEBI:16605"/>
        <dbReference type="ChEBI" id="CHEBI:57783"/>
        <dbReference type="ChEBI" id="CHEBI:58349"/>
        <dbReference type="EC" id="1.1.1.54"/>
    </reaction>
</comment>
<comment type="catalytic activity">
    <reaction evidence="4">
        <text>glycerol + NADP(+) = D-glyceraldehyde + NADPH + H(+)</text>
        <dbReference type="Rhea" id="RHEA:23592"/>
        <dbReference type="ChEBI" id="CHEBI:15378"/>
        <dbReference type="ChEBI" id="CHEBI:17378"/>
        <dbReference type="ChEBI" id="CHEBI:17754"/>
        <dbReference type="ChEBI" id="CHEBI:57783"/>
        <dbReference type="ChEBI" id="CHEBI:58349"/>
        <dbReference type="EC" id="1.1.1.372"/>
    </reaction>
</comment>
<comment type="catalytic activity">
    <reaction evidence="4">
        <text>glycerol + NADP(+) = L-glyceraldehyde + NADPH + H(+)</text>
        <dbReference type="Rhea" id="RHEA:38111"/>
        <dbReference type="ChEBI" id="CHEBI:15378"/>
        <dbReference type="ChEBI" id="CHEBI:17754"/>
        <dbReference type="ChEBI" id="CHEBI:27975"/>
        <dbReference type="ChEBI" id="CHEBI:57783"/>
        <dbReference type="ChEBI" id="CHEBI:58349"/>
        <dbReference type="EC" id="1.1.1.372"/>
    </reaction>
</comment>
<comment type="catalytic activity">
    <reaction evidence="4">
        <text>hydroxyacetone + NADP(+) = methylglyoxal + NADPH + H(+)</text>
        <dbReference type="Rhea" id="RHEA:27986"/>
        <dbReference type="ChEBI" id="CHEBI:15378"/>
        <dbReference type="ChEBI" id="CHEBI:17158"/>
        <dbReference type="ChEBI" id="CHEBI:27957"/>
        <dbReference type="ChEBI" id="CHEBI:57783"/>
        <dbReference type="ChEBI" id="CHEBI:58349"/>
    </reaction>
</comment>
<comment type="catalytic activity">
    <reaction evidence="4">
        <text>3-deoxyfructose + NADP(+) = 3-deoxyglucosone + NADPH + H(+)</text>
        <dbReference type="Rhea" id="RHEA:58668"/>
        <dbReference type="ChEBI" id="CHEBI:15378"/>
        <dbReference type="ChEBI" id="CHEBI:57783"/>
        <dbReference type="ChEBI" id="CHEBI:58349"/>
        <dbReference type="ChEBI" id="CHEBI:60777"/>
        <dbReference type="ChEBI" id="CHEBI:142685"/>
    </reaction>
</comment>
<comment type="catalytic activity">
    <reaction evidence="4">
        <text>(R)-mevalonate + NADP(+) = (R)-mevaldate + NADPH + H(+)</text>
        <dbReference type="Rhea" id="RHEA:20193"/>
        <dbReference type="ChEBI" id="CHEBI:15378"/>
        <dbReference type="ChEBI" id="CHEBI:36464"/>
        <dbReference type="ChEBI" id="CHEBI:57783"/>
        <dbReference type="ChEBI" id="CHEBI:58349"/>
        <dbReference type="ChEBI" id="CHEBI:195523"/>
    </reaction>
</comment>
<comment type="catalytic activity">
    <reaction evidence="4">
        <text>pyridine 3-methanol + NADP(+) = pyridine-3-carbaldehyde + NADPH + H(+)</text>
        <dbReference type="Rhea" id="RHEA:58776"/>
        <dbReference type="ChEBI" id="CHEBI:15378"/>
        <dbReference type="ChEBI" id="CHEBI:28345"/>
        <dbReference type="ChEBI" id="CHEBI:45213"/>
        <dbReference type="ChEBI" id="CHEBI:57783"/>
        <dbReference type="ChEBI" id="CHEBI:58349"/>
    </reaction>
</comment>
<comment type="catalytic activity">
    <reaction evidence="6">
        <text>S-nitroso-CoA + NADPH + H(+) = sulfinamide-CoA + NADP(+)</text>
        <dbReference type="Rhea" id="RHEA:78375"/>
        <dbReference type="ChEBI" id="CHEBI:15378"/>
        <dbReference type="ChEBI" id="CHEBI:57783"/>
        <dbReference type="ChEBI" id="CHEBI:58349"/>
        <dbReference type="ChEBI" id="CHEBI:145546"/>
        <dbReference type="ChEBI" id="CHEBI:145548"/>
    </reaction>
    <physiologicalReaction direction="left-to-right" evidence="6">
        <dbReference type="Rhea" id="RHEA:78376"/>
    </physiologicalReaction>
</comment>
<comment type="catalytic activity">
    <reaction evidence="7">
        <text>S-nitrosoglutathione + NADPH + H(+) = S-(hydroxysulfenamide)glutathione + NADP(+)</text>
        <dbReference type="Rhea" id="RHEA:63500"/>
        <dbReference type="ChEBI" id="CHEBI:15378"/>
        <dbReference type="ChEBI" id="CHEBI:57783"/>
        <dbReference type="ChEBI" id="CHEBI:58349"/>
        <dbReference type="ChEBI" id="CHEBI:145544"/>
        <dbReference type="ChEBI" id="CHEBI:229723"/>
    </reaction>
</comment>
<comment type="biophysicochemical properties">
    <kinetics>
        <KM evidence="6">20.5 uM for S-nitroso-CoA</KM>
        <KM evidence="7">87.8 uM for S-nitroso-glutathione</KM>
        <text evidence="6 7">kcat is 627 min(-1) for S-nitroso-CoA as substrate (PubMed:25512491). kcat is 471 min(-1) for S-nitroso-glutathione as substrate (PubMed:31649033).</text>
    </kinetics>
</comment>
<comment type="subunit">
    <text evidence="3">Monomer.</text>
</comment>
<comment type="subcellular location">
    <subcellularLocation>
        <location evidence="5">Cytoplasm</location>
        <location evidence="5">Cytosol</location>
    </subcellularLocation>
    <subcellularLocation>
        <location evidence="5">Apical cell membrane</location>
    </subcellularLocation>
</comment>
<comment type="similarity">
    <text evidence="9">Belongs to the aldo/keto reductase family.</text>
</comment>
<keyword id="KW-0007">Acetylation</keyword>
<keyword id="KW-1003">Cell membrane</keyword>
<keyword id="KW-0963">Cytoplasm</keyword>
<keyword id="KW-0443">Lipid metabolism</keyword>
<keyword id="KW-0472">Membrane</keyword>
<keyword id="KW-0521">NADP</keyword>
<keyword id="KW-0560">Oxidoreductase</keyword>
<keyword id="KW-0597">Phosphoprotein</keyword>
<keyword id="KW-1185">Reference proteome</keyword>
<sequence>MAASCILLHTGQKMPLIGLGTWKSDPGQVKAAIKYALSVGYRHIDCAAIYGNETEIGEALKENVGPGKLVPREELFVTSKLWNTKHHPEDVEPALRKTLADLQLEYLDLYLMHWPYAFERGDSPFPKNADGTIRYDSTHYKETWRALEALVAKGLVRALGLSNFNSRQIDDVLSVASVRPAVLQVECHPYLAQNELIAHCQARNLEVTAYSPLGSSDRAWRDPEEPVLLKEPVVLALAEKHGRSPAQILLRWQVQRKVSCIPKSVTPSRILENIQVFDFTFSPEEMKQLDALNKNLRFIVPMLTVDGKRVPRDAGHPLYPFNDPY</sequence>
<feature type="initiator methionine" description="Removed" evidence="2">
    <location>
        <position position="1"/>
    </location>
</feature>
<feature type="chain" id="PRO_0000287129" description="Aldo-keto reductase family 1 member A1">
    <location>
        <begin position="2"/>
        <end position="325"/>
    </location>
</feature>
<feature type="active site" description="Proton donor" evidence="2">
    <location>
        <position position="50"/>
    </location>
</feature>
<feature type="binding site" evidence="1">
    <location>
        <begin position="11"/>
        <end position="20"/>
    </location>
    <ligand>
        <name>NADP(+)</name>
        <dbReference type="ChEBI" id="CHEBI:58349"/>
    </ligand>
</feature>
<feature type="binding site" evidence="3">
    <location>
        <position position="21"/>
    </location>
    <ligand>
        <name>NADP(+)</name>
        <dbReference type="ChEBI" id="CHEBI:58349"/>
    </ligand>
</feature>
<feature type="binding site" evidence="3">
    <location>
        <position position="22"/>
    </location>
    <ligand>
        <name>NADP(+)</name>
        <dbReference type="ChEBI" id="CHEBI:58349"/>
    </ligand>
</feature>
<feature type="binding site" evidence="3">
    <location>
        <position position="45"/>
    </location>
    <ligand>
        <name>NADP(+)</name>
        <dbReference type="ChEBI" id="CHEBI:58349"/>
    </ligand>
</feature>
<feature type="binding site" evidence="3">
    <location>
        <position position="162"/>
    </location>
    <ligand>
        <name>NADP(+)</name>
        <dbReference type="ChEBI" id="CHEBI:58349"/>
    </ligand>
</feature>
<feature type="binding site" evidence="3">
    <location>
        <position position="163"/>
    </location>
    <ligand>
        <name>NADP(+)</name>
        <dbReference type="ChEBI" id="CHEBI:58349"/>
    </ligand>
</feature>
<feature type="binding site" evidence="3">
    <location>
        <position position="211"/>
    </location>
    <ligand>
        <name>NADP(+)</name>
        <dbReference type="ChEBI" id="CHEBI:58349"/>
    </ligand>
</feature>
<feature type="binding site" evidence="3">
    <location>
        <position position="213"/>
    </location>
    <ligand>
        <name>NADP(+)</name>
        <dbReference type="ChEBI" id="CHEBI:58349"/>
    </ligand>
</feature>
<feature type="binding site" evidence="3">
    <location>
        <position position="215"/>
    </location>
    <ligand>
        <name>NADP(+)</name>
        <dbReference type="ChEBI" id="CHEBI:58349"/>
    </ligand>
</feature>
<feature type="binding site" evidence="3">
    <location>
        <position position="216"/>
    </location>
    <ligand>
        <name>NADP(+)</name>
        <dbReference type="ChEBI" id="CHEBI:58349"/>
    </ligand>
</feature>
<feature type="binding site" evidence="3">
    <location>
        <position position="263"/>
    </location>
    <ligand>
        <name>NADP(+)</name>
        <dbReference type="ChEBI" id="CHEBI:58349"/>
    </ligand>
</feature>
<feature type="binding site" evidence="3">
    <location>
        <position position="264"/>
    </location>
    <ligand>
        <name>NADP(+)</name>
        <dbReference type="ChEBI" id="CHEBI:58349"/>
    </ligand>
</feature>
<feature type="binding site" evidence="3">
    <location>
        <position position="265"/>
    </location>
    <ligand>
        <name>NADP(+)</name>
        <dbReference type="ChEBI" id="CHEBI:58349"/>
    </ligand>
</feature>
<feature type="binding site" evidence="3">
    <location>
        <position position="266"/>
    </location>
    <ligand>
        <name>NADP(+)</name>
        <dbReference type="ChEBI" id="CHEBI:58349"/>
    </ligand>
</feature>
<feature type="binding site" evidence="3">
    <location>
        <position position="269"/>
    </location>
    <ligand>
        <name>NADP(+)</name>
        <dbReference type="ChEBI" id="CHEBI:58349"/>
    </ligand>
</feature>
<feature type="binding site" evidence="3">
    <location>
        <position position="273"/>
    </location>
    <ligand>
        <name>NADP(+)</name>
        <dbReference type="ChEBI" id="CHEBI:58349"/>
    </ligand>
</feature>
<feature type="site" description="Lowers pKa of active site Tyr" evidence="2">
    <location>
        <position position="80"/>
    </location>
</feature>
<feature type="modified residue" description="N-acetylalanine" evidence="2">
    <location>
        <position position="2"/>
    </location>
</feature>
<feature type="modified residue" description="Phosphoserine" evidence="4">
    <location>
        <position position="4"/>
    </location>
</feature>
<feature type="modified residue" description="Phosphoserine" evidence="2">
    <location>
        <position position="38"/>
    </location>
</feature>
<feature type="modified residue" description="N6-acetyllysine; alternate" evidence="5">
    <location>
        <position position="127"/>
    </location>
</feature>
<feature type="modified residue" description="N6-succinyllysine; alternate" evidence="5">
    <location>
        <position position="127"/>
    </location>
</feature>
<feature type="modified residue" description="Phosphoserine" evidence="2">
    <location>
        <position position="211"/>
    </location>
</feature>
<gene>
    <name evidence="8" type="primary">AKR1A1</name>
</gene>
<evidence type="ECO:0000250" key="1">
    <source>
        <dbReference type="UniProtKB" id="O60218"/>
    </source>
</evidence>
<evidence type="ECO:0000250" key="2">
    <source>
        <dbReference type="UniProtKB" id="P14550"/>
    </source>
</evidence>
<evidence type="ECO:0000250" key="3">
    <source>
        <dbReference type="UniProtKB" id="P50578"/>
    </source>
</evidence>
<evidence type="ECO:0000250" key="4">
    <source>
        <dbReference type="UniProtKB" id="P51635"/>
    </source>
</evidence>
<evidence type="ECO:0000250" key="5">
    <source>
        <dbReference type="UniProtKB" id="Q9JII6"/>
    </source>
</evidence>
<evidence type="ECO:0000269" key="6">
    <source>
    </source>
</evidence>
<evidence type="ECO:0000269" key="7">
    <source>
    </source>
</evidence>
<evidence type="ECO:0000303" key="8">
    <source>
    </source>
</evidence>
<evidence type="ECO:0000305" key="9"/>
<proteinExistence type="evidence at protein level"/>
<dbReference type="EC" id="1.1.1.2" evidence="4"/>
<dbReference type="EC" id="1.1.1.372" evidence="4"/>
<dbReference type="EC" id="1.1.1.54" evidence="4"/>
<dbReference type="EC" id="1.1.1.19" evidence="4"/>
<dbReference type="EC" id="1.1.1.20" evidence="4"/>
<dbReference type="EC" id="1.6.-.-" evidence="6"/>
<dbReference type="EMBL" id="BC102166">
    <property type="protein sequence ID" value="AAI02167.1"/>
    <property type="molecule type" value="mRNA"/>
</dbReference>
<dbReference type="RefSeq" id="NP_001069981.1">
    <property type="nucleotide sequence ID" value="NM_001076513.2"/>
</dbReference>
<dbReference type="SMR" id="Q3ZCJ2"/>
<dbReference type="FunCoup" id="Q3ZCJ2">
    <property type="interactions" value="1989"/>
</dbReference>
<dbReference type="STRING" id="9913.ENSBTAP00000000630"/>
<dbReference type="BindingDB" id="Q3ZCJ2"/>
<dbReference type="PaxDb" id="9913-ENSBTAP00000000630"/>
<dbReference type="PeptideAtlas" id="Q3ZCJ2"/>
<dbReference type="Ensembl" id="ENSBTAT00000000630.5">
    <property type="protein sequence ID" value="ENSBTAP00000000630.3"/>
    <property type="gene ID" value="ENSBTAG00000000497.5"/>
</dbReference>
<dbReference type="GeneID" id="618607"/>
<dbReference type="KEGG" id="bta:618607"/>
<dbReference type="CTD" id="10327"/>
<dbReference type="VEuPathDB" id="HostDB:ENSBTAG00000000497"/>
<dbReference type="VGNC" id="VGNC:25795">
    <property type="gene designation" value="AKR1A1"/>
</dbReference>
<dbReference type="eggNOG" id="KOG1577">
    <property type="taxonomic scope" value="Eukaryota"/>
</dbReference>
<dbReference type="GeneTree" id="ENSGT00940000156539"/>
<dbReference type="HOGENOM" id="CLU_023205_0_0_1"/>
<dbReference type="InParanoid" id="Q3ZCJ2"/>
<dbReference type="OMA" id="MVNQIFL"/>
<dbReference type="OrthoDB" id="416253at2759"/>
<dbReference type="TreeFam" id="TF106492"/>
<dbReference type="Reactome" id="R-BTA-156590">
    <property type="pathway name" value="Glutathione conjugation"/>
</dbReference>
<dbReference type="Reactome" id="R-BTA-5661270">
    <property type="pathway name" value="Formation of xylulose-5-phosphate"/>
</dbReference>
<dbReference type="SABIO-RK" id="Q3ZCJ2"/>
<dbReference type="Proteomes" id="UP000009136">
    <property type="component" value="Chromosome 3"/>
</dbReference>
<dbReference type="Bgee" id="ENSBTAG00000000497">
    <property type="expression patterns" value="Expressed in cortex of kidney and 106 other cell types or tissues"/>
</dbReference>
<dbReference type="GO" id="GO:0016324">
    <property type="term" value="C:apical plasma membrane"/>
    <property type="evidence" value="ECO:0000250"/>
    <property type="project" value="UniProtKB"/>
</dbReference>
<dbReference type="GO" id="GO:0005829">
    <property type="term" value="C:cytosol"/>
    <property type="evidence" value="ECO:0000250"/>
    <property type="project" value="UniProtKB"/>
</dbReference>
<dbReference type="GO" id="GO:0045202">
    <property type="term" value="C:synapse"/>
    <property type="evidence" value="ECO:0007669"/>
    <property type="project" value="Ensembl"/>
</dbReference>
<dbReference type="GO" id="GO:0004032">
    <property type="term" value="F:aldose reductase (NADPH) activity"/>
    <property type="evidence" value="ECO:0000318"/>
    <property type="project" value="GO_Central"/>
</dbReference>
<dbReference type="GO" id="GO:0047655">
    <property type="term" value="F:allyl-alcohol dehydrogenase activity"/>
    <property type="evidence" value="ECO:0007669"/>
    <property type="project" value="UniProtKB-EC"/>
</dbReference>
<dbReference type="GO" id="GO:0047941">
    <property type="term" value="F:glucuronolactone reductase activity"/>
    <property type="evidence" value="ECO:0000250"/>
    <property type="project" value="UniProtKB"/>
</dbReference>
<dbReference type="GO" id="GO:0047956">
    <property type="term" value="F:glycerol dehydrogenase (NADP+) activity"/>
    <property type="evidence" value="ECO:0007669"/>
    <property type="project" value="RHEA"/>
</dbReference>
<dbReference type="GO" id="GO:0047939">
    <property type="term" value="F:L-glucuronate reductase activity"/>
    <property type="evidence" value="ECO:0000250"/>
    <property type="project" value="UniProtKB"/>
</dbReference>
<dbReference type="GO" id="GO:1990002">
    <property type="term" value="F:methylglyoxal reductase (NADPH) (acetol producing) activity"/>
    <property type="evidence" value="ECO:0007669"/>
    <property type="project" value="RHEA"/>
</dbReference>
<dbReference type="GO" id="GO:0080007">
    <property type="term" value="F:S-nitrosoglutathione reductase (NADH) activity"/>
    <property type="evidence" value="ECO:0007669"/>
    <property type="project" value="Ensembl"/>
</dbReference>
<dbReference type="GO" id="GO:0160163">
    <property type="term" value="F:S-nitrosoglutathione reductase (NADPH) activity"/>
    <property type="evidence" value="ECO:0007669"/>
    <property type="project" value="RHEA"/>
</dbReference>
<dbReference type="GO" id="GO:0046185">
    <property type="term" value="P:aldehyde catabolic process"/>
    <property type="evidence" value="ECO:0007669"/>
    <property type="project" value="Ensembl"/>
</dbReference>
<dbReference type="GO" id="GO:0110095">
    <property type="term" value="P:cellular detoxification of aldehyde"/>
    <property type="evidence" value="ECO:0000250"/>
    <property type="project" value="UniProtKB"/>
</dbReference>
<dbReference type="GO" id="GO:0042840">
    <property type="term" value="P:D-glucuronate catabolic process"/>
    <property type="evidence" value="ECO:0000250"/>
    <property type="project" value="UniProtKB"/>
</dbReference>
<dbReference type="GO" id="GO:0019640">
    <property type="term" value="P:D-glucuronate catabolic process to D-xylulose 5-phosphate"/>
    <property type="evidence" value="ECO:0007669"/>
    <property type="project" value="Ensembl"/>
</dbReference>
<dbReference type="GO" id="GO:0044597">
    <property type="term" value="P:daunorubicin metabolic process"/>
    <property type="evidence" value="ECO:0007669"/>
    <property type="project" value="Ensembl"/>
</dbReference>
<dbReference type="GO" id="GO:0044598">
    <property type="term" value="P:doxorubicin metabolic process"/>
    <property type="evidence" value="ECO:0007669"/>
    <property type="project" value="Ensembl"/>
</dbReference>
<dbReference type="GO" id="GO:0019853">
    <property type="term" value="P:L-ascorbic acid biosynthetic process"/>
    <property type="evidence" value="ECO:0000250"/>
    <property type="project" value="UniProtKB"/>
</dbReference>
<dbReference type="GO" id="GO:0006629">
    <property type="term" value="P:lipid metabolic process"/>
    <property type="evidence" value="ECO:0007669"/>
    <property type="project" value="UniProtKB-KW"/>
</dbReference>
<dbReference type="CDD" id="cd19106">
    <property type="entry name" value="AKR_AKR1A1-4"/>
    <property type="match status" value="1"/>
</dbReference>
<dbReference type="FunFam" id="3.20.20.100:FF:000006">
    <property type="entry name" value="Aldo-keto reductase family 1 member A1"/>
    <property type="match status" value="1"/>
</dbReference>
<dbReference type="Gene3D" id="3.20.20.100">
    <property type="entry name" value="NADP-dependent oxidoreductase domain"/>
    <property type="match status" value="1"/>
</dbReference>
<dbReference type="InterPro" id="IPR020471">
    <property type="entry name" value="AKR"/>
</dbReference>
<dbReference type="InterPro" id="IPR044481">
    <property type="entry name" value="AKR1A"/>
</dbReference>
<dbReference type="InterPro" id="IPR018170">
    <property type="entry name" value="Aldo/ket_reductase_CS"/>
</dbReference>
<dbReference type="InterPro" id="IPR023210">
    <property type="entry name" value="NADP_OxRdtase_dom"/>
</dbReference>
<dbReference type="InterPro" id="IPR036812">
    <property type="entry name" value="NADP_OxRdtase_dom_sf"/>
</dbReference>
<dbReference type="PANTHER" id="PTHR11732">
    <property type="entry name" value="ALDO/KETO REDUCTASE"/>
    <property type="match status" value="1"/>
</dbReference>
<dbReference type="Pfam" id="PF00248">
    <property type="entry name" value="Aldo_ket_red"/>
    <property type="match status" value="1"/>
</dbReference>
<dbReference type="PIRSF" id="PIRSF000097">
    <property type="entry name" value="AKR"/>
    <property type="match status" value="1"/>
</dbReference>
<dbReference type="PRINTS" id="PR00069">
    <property type="entry name" value="ALDKETRDTASE"/>
</dbReference>
<dbReference type="SUPFAM" id="SSF51430">
    <property type="entry name" value="NAD(P)-linked oxidoreductase"/>
    <property type="match status" value="1"/>
</dbReference>
<dbReference type="PROSITE" id="PS00798">
    <property type="entry name" value="ALDOKETO_REDUCTASE_1"/>
    <property type="match status" value="1"/>
</dbReference>
<dbReference type="PROSITE" id="PS00062">
    <property type="entry name" value="ALDOKETO_REDUCTASE_2"/>
    <property type="match status" value="1"/>
</dbReference>
<dbReference type="PROSITE" id="PS00063">
    <property type="entry name" value="ALDOKETO_REDUCTASE_3"/>
    <property type="match status" value="1"/>
</dbReference>
<name>AK1A1_BOVIN</name>
<protein>
    <recommendedName>
        <fullName>Aldo-keto reductase family 1 member A1</fullName>
        <ecNumber evidence="4">1.1.1.2</ecNumber>
        <ecNumber evidence="4">1.1.1.372</ecNumber>
        <ecNumber evidence="4">1.1.1.54</ecNumber>
    </recommendedName>
    <alternativeName>
        <fullName>Alcohol dehydrogenase [NADP(+)]</fullName>
    </alternativeName>
    <alternativeName>
        <fullName>Aldehyde reductase</fullName>
    </alternativeName>
    <alternativeName>
        <fullName evidence="4">Glucuronate reductase</fullName>
        <ecNumber evidence="4">1.1.1.19</ecNumber>
    </alternativeName>
    <alternativeName>
        <fullName evidence="4">Glucuronolactone reductase</fullName>
        <ecNumber evidence="4">1.1.1.20</ecNumber>
    </alternativeName>
    <alternativeName>
        <fullName evidence="8">S-nitroso-CoA reductase</fullName>
        <shortName>ScorR</shortName>
        <ecNumber evidence="6">1.6.-.-</ecNumber>
    </alternativeName>
</protein>